<reference key="1">
    <citation type="submission" date="1993-08" db="EMBL/GenBank/DDBJ databases">
        <authorList>
            <person name="Thiara A.S."/>
            <person name="Cundliffe E."/>
        </authorList>
    </citation>
    <scope>NUCLEOTIDE SEQUENCE [GENOMIC DNA]</scope>
</reference>
<proteinExistence type="inferred from homology"/>
<sequence length="434" mass="48477">MSPKRRRLMAAALGACVALVLPLHAGSAQPSTAKTPERTVFEVTASTPEARTRVARTGVDVLGQDGDKLTVVAEPRQQWALRATGLRVENLGDYDAQLQALGKVDFTDPQVGTQDFPSGYTGYHNFQETVTELNQTVTDHPNLVRLSSVGKSYQGRDLWMLKLSDNPAVDENEPEVLFTCNMHAREHLTVEMCLRIIKQYTDGYATNPTIKNLVDSREIWIIPMVNPDGVEYDIATGSFRSWRKNRQPNSTAVGTDPNRNWGYQWGCCGGSSSSGSSETTAARRRSPPRRSPHPHFVNTRVVGGVQQIKTHIDWHTYSELILWPYGYTYNDTAPGLDAQQASAFSTLGRRMASLNGTRRQQSSDLYITDGTINDWLWGVHKIWSYTFEMYPKSSSPGFYPRDTVIATQTQRNDSAVELFLSYSDCVPRIIGRTC</sequence>
<protein>
    <recommendedName>
        <fullName evidence="1">Zinc carboxypeptidase</fullName>
        <ecNumber evidence="1">3.4.17.18</ecNumber>
    </recommendedName>
</protein>
<evidence type="ECO:0000250" key="1">
    <source>
        <dbReference type="UniProtKB" id="P18143"/>
    </source>
</evidence>
<evidence type="ECO:0000255" key="2"/>
<evidence type="ECO:0000255" key="3">
    <source>
        <dbReference type="PROSITE-ProRule" id="PRU01379"/>
    </source>
</evidence>
<evidence type="ECO:0000256" key="4">
    <source>
        <dbReference type="SAM" id="MobiDB-lite"/>
    </source>
</evidence>
<evidence type="ECO:0000305" key="5"/>
<dbReference type="EC" id="3.4.17.18" evidence="1"/>
<dbReference type="EMBL" id="U00619">
    <property type="protein sequence ID" value="AAA73397.1"/>
    <property type="molecule type" value="Unassigned_DNA"/>
</dbReference>
<dbReference type="SMR" id="P39041"/>
<dbReference type="MEROPS" id="M14.007"/>
<dbReference type="BRENDA" id="3.4.17.18">
    <property type="organism ID" value="5989"/>
</dbReference>
<dbReference type="GO" id="GO:0005615">
    <property type="term" value="C:extracellular space"/>
    <property type="evidence" value="ECO:0007669"/>
    <property type="project" value="TreeGrafter"/>
</dbReference>
<dbReference type="GO" id="GO:0004181">
    <property type="term" value="F:metallocarboxypeptidase activity"/>
    <property type="evidence" value="ECO:0007669"/>
    <property type="project" value="InterPro"/>
</dbReference>
<dbReference type="GO" id="GO:0008270">
    <property type="term" value="F:zinc ion binding"/>
    <property type="evidence" value="ECO:0007669"/>
    <property type="project" value="InterPro"/>
</dbReference>
<dbReference type="GO" id="GO:0006508">
    <property type="term" value="P:proteolysis"/>
    <property type="evidence" value="ECO:0007669"/>
    <property type="project" value="UniProtKB-KW"/>
</dbReference>
<dbReference type="CDD" id="cd03859">
    <property type="entry name" value="M14_CPT"/>
    <property type="match status" value="1"/>
</dbReference>
<dbReference type="FunFam" id="3.40.630.10:FF:000084">
    <property type="entry name" value="Carboxypeptidase B2"/>
    <property type="match status" value="1"/>
</dbReference>
<dbReference type="Gene3D" id="3.40.630.10">
    <property type="entry name" value="Zn peptidases"/>
    <property type="match status" value="1"/>
</dbReference>
<dbReference type="InterPro" id="IPR033810">
    <property type="entry name" value="Carboxypeptidase_T"/>
</dbReference>
<dbReference type="InterPro" id="IPR000834">
    <property type="entry name" value="Peptidase_M14"/>
</dbReference>
<dbReference type="PANTHER" id="PTHR11705">
    <property type="entry name" value="PROTEASE FAMILY M14 CARBOXYPEPTIDASE A,B"/>
    <property type="match status" value="1"/>
</dbReference>
<dbReference type="PANTHER" id="PTHR11705:SF143">
    <property type="entry name" value="SLL0236 PROTEIN"/>
    <property type="match status" value="1"/>
</dbReference>
<dbReference type="Pfam" id="PF00246">
    <property type="entry name" value="Peptidase_M14"/>
    <property type="match status" value="1"/>
</dbReference>
<dbReference type="PRINTS" id="PR00765">
    <property type="entry name" value="CRBOXYPTASEA"/>
</dbReference>
<dbReference type="SMART" id="SM00631">
    <property type="entry name" value="Zn_pept"/>
    <property type="match status" value="1"/>
</dbReference>
<dbReference type="SUPFAM" id="SSF53187">
    <property type="entry name" value="Zn-dependent exopeptidases"/>
    <property type="match status" value="1"/>
</dbReference>
<dbReference type="PROSITE" id="PS00132">
    <property type="entry name" value="CARBOXYPEPT_ZN_1"/>
    <property type="match status" value="1"/>
</dbReference>
<dbReference type="PROSITE" id="PS00133">
    <property type="entry name" value="CARBOXYPEPT_ZN_2"/>
    <property type="match status" value="1"/>
</dbReference>
<dbReference type="PROSITE" id="PS52035">
    <property type="entry name" value="PEPTIDASE_M14"/>
    <property type="match status" value="1"/>
</dbReference>
<accession>P39041</accession>
<organism>
    <name type="scientific">Saccharothrix mutabilis subsp. capreolus</name>
    <name type="common">Streptomyces capreolus</name>
    <dbReference type="NCBI Taxonomy" id="66854"/>
    <lineage>
        <taxon>Bacteria</taxon>
        <taxon>Bacillati</taxon>
        <taxon>Actinomycetota</taxon>
        <taxon>Actinomycetes</taxon>
        <taxon>Pseudonocardiales</taxon>
        <taxon>Pseudonocardiaceae</taxon>
        <taxon>Saccharothrix</taxon>
    </lineage>
</organism>
<name>CBPS_STRMP</name>
<feature type="signal peptide" evidence="2">
    <location>
        <begin position="1"/>
        <end position="33"/>
    </location>
</feature>
<feature type="propeptide" id="PRO_0000004413" description="Activation peptide" evidence="2">
    <location>
        <begin position="34"/>
        <end position="114"/>
    </location>
</feature>
<feature type="chain" id="PRO_0000004414" description="Zinc carboxypeptidase">
    <location>
        <begin position="115"/>
        <end position="434"/>
    </location>
</feature>
<feature type="domain" description="Peptidase M14" evidence="3">
    <location>
        <begin position="122"/>
        <end position="423"/>
    </location>
</feature>
<feature type="region of interest" description="Disordered" evidence="4">
    <location>
        <begin position="270"/>
        <end position="295"/>
    </location>
</feature>
<feature type="compositionally biased region" description="Basic residues" evidence="4">
    <location>
        <begin position="282"/>
        <end position="293"/>
    </location>
</feature>
<feature type="active site" description="Proton donor/acceptor" evidence="3">
    <location>
        <position position="388"/>
    </location>
</feature>
<feature type="binding site" evidence="3">
    <location>
        <position position="183"/>
    </location>
    <ligand>
        <name>Zn(2+)</name>
        <dbReference type="ChEBI" id="CHEBI:29105"/>
        <note>catalytic</note>
    </ligand>
</feature>
<feature type="binding site" evidence="3">
    <location>
        <position position="186"/>
    </location>
    <ligand>
        <name>Zn(2+)</name>
        <dbReference type="ChEBI" id="CHEBI:29105"/>
        <note>catalytic</note>
    </ligand>
</feature>
<feature type="binding site" evidence="3">
    <location>
        <position position="315"/>
    </location>
    <ligand>
        <name>Zn(2+)</name>
        <dbReference type="ChEBI" id="CHEBI:29105"/>
        <note>catalytic</note>
    </ligand>
</feature>
<keyword id="KW-0121">Carboxypeptidase</keyword>
<keyword id="KW-0378">Hydrolase</keyword>
<keyword id="KW-0479">Metal-binding</keyword>
<keyword id="KW-0482">Metalloprotease</keyword>
<keyword id="KW-0645">Protease</keyword>
<keyword id="KW-0732">Signal</keyword>
<keyword id="KW-0862">Zinc</keyword>
<keyword id="KW-0865">Zymogen</keyword>
<comment type="function">
    <text evidence="1">Carboxypeptidase that possesses the specificities of both mammalian Cpase A and B. Thus shows broad substrate specificity, being able to cleave Cbz-Gly-Leu, Cbz-Gly-Val, Cbz-Gly-Phe, Cbz-Gly-Lys and Bz-Gly-Arg in vitro.</text>
</comment>
<comment type="catalytic activity">
    <reaction evidence="1">
        <text>Releases a C-terminal residue, which may be hydrophobic or positively charged.</text>
        <dbReference type="EC" id="3.4.17.18"/>
    </reaction>
</comment>
<comment type="cofactor">
    <cofactor evidence="1">
        <name>Zn(2+)</name>
        <dbReference type="ChEBI" id="CHEBI:29105"/>
    </cofactor>
    <text evidence="1">Binds 1 zinc ion per subunit.</text>
</comment>
<comment type="similarity">
    <text evidence="5">Belongs to the peptidase M14 family.</text>
</comment>